<proteinExistence type="inferred from homology"/>
<keyword id="KW-0067">ATP-binding</keyword>
<keyword id="KW-0963">Cytoplasm</keyword>
<keyword id="KW-0436">Ligase</keyword>
<keyword id="KW-0547">Nucleotide-binding</keyword>
<keyword id="KW-0658">Purine biosynthesis</keyword>
<keyword id="KW-1185">Reference proteome</keyword>
<reference key="1">
    <citation type="submission" date="2006-02" db="EMBL/GenBank/DDBJ databases">
        <title>Complete sequence of chromosome of Rhodoferax ferrireducens DSM 15236.</title>
        <authorList>
            <person name="Copeland A."/>
            <person name="Lucas S."/>
            <person name="Lapidus A."/>
            <person name="Barry K."/>
            <person name="Detter J.C."/>
            <person name="Glavina del Rio T."/>
            <person name="Hammon N."/>
            <person name="Israni S."/>
            <person name="Pitluck S."/>
            <person name="Brettin T."/>
            <person name="Bruce D."/>
            <person name="Han C."/>
            <person name="Tapia R."/>
            <person name="Gilna P."/>
            <person name="Kiss H."/>
            <person name="Schmutz J."/>
            <person name="Larimer F."/>
            <person name="Land M."/>
            <person name="Kyrpides N."/>
            <person name="Ivanova N."/>
            <person name="Richardson P."/>
        </authorList>
    </citation>
    <scope>NUCLEOTIDE SEQUENCE [LARGE SCALE GENOMIC DNA]</scope>
    <source>
        <strain>ATCC BAA-621 / DSM 15236 / T118</strain>
    </source>
</reference>
<dbReference type="EC" id="6.3.3.1" evidence="1"/>
<dbReference type="EMBL" id="CP000267">
    <property type="protein sequence ID" value="ABD70229.1"/>
    <property type="molecule type" value="Genomic_DNA"/>
</dbReference>
<dbReference type="RefSeq" id="WP_011464797.1">
    <property type="nucleotide sequence ID" value="NC_007908.1"/>
</dbReference>
<dbReference type="SMR" id="Q21VH4"/>
<dbReference type="STRING" id="338969.Rfer_2512"/>
<dbReference type="KEGG" id="rfr:Rfer_2512"/>
<dbReference type="eggNOG" id="COG0150">
    <property type="taxonomic scope" value="Bacteria"/>
</dbReference>
<dbReference type="HOGENOM" id="CLU_047116_0_0_4"/>
<dbReference type="OrthoDB" id="9777881at2"/>
<dbReference type="UniPathway" id="UPA00074">
    <property type="reaction ID" value="UER00129"/>
</dbReference>
<dbReference type="Proteomes" id="UP000008332">
    <property type="component" value="Chromosome"/>
</dbReference>
<dbReference type="GO" id="GO:0005829">
    <property type="term" value="C:cytosol"/>
    <property type="evidence" value="ECO:0007669"/>
    <property type="project" value="TreeGrafter"/>
</dbReference>
<dbReference type="GO" id="GO:0005524">
    <property type="term" value="F:ATP binding"/>
    <property type="evidence" value="ECO:0007669"/>
    <property type="project" value="UniProtKB-KW"/>
</dbReference>
<dbReference type="GO" id="GO:0004637">
    <property type="term" value="F:phosphoribosylamine-glycine ligase activity"/>
    <property type="evidence" value="ECO:0007669"/>
    <property type="project" value="TreeGrafter"/>
</dbReference>
<dbReference type="GO" id="GO:0004641">
    <property type="term" value="F:phosphoribosylformylglycinamidine cyclo-ligase activity"/>
    <property type="evidence" value="ECO:0007669"/>
    <property type="project" value="UniProtKB-UniRule"/>
</dbReference>
<dbReference type="GO" id="GO:0006189">
    <property type="term" value="P:'de novo' IMP biosynthetic process"/>
    <property type="evidence" value="ECO:0007669"/>
    <property type="project" value="UniProtKB-UniRule"/>
</dbReference>
<dbReference type="GO" id="GO:0046084">
    <property type="term" value="P:adenine biosynthetic process"/>
    <property type="evidence" value="ECO:0007669"/>
    <property type="project" value="TreeGrafter"/>
</dbReference>
<dbReference type="CDD" id="cd02196">
    <property type="entry name" value="PurM"/>
    <property type="match status" value="1"/>
</dbReference>
<dbReference type="FunFam" id="3.30.1330.10:FF:000001">
    <property type="entry name" value="Phosphoribosylformylglycinamidine cyclo-ligase"/>
    <property type="match status" value="1"/>
</dbReference>
<dbReference type="FunFam" id="3.90.650.10:FF:000001">
    <property type="entry name" value="Phosphoribosylformylglycinamidine cyclo-ligase"/>
    <property type="match status" value="1"/>
</dbReference>
<dbReference type="Gene3D" id="3.90.650.10">
    <property type="entry name" value="PurM-like C-terminal domain"/>
    <property type="match status" value="1"/>
</dbReference>
<dbReference type="Gene3D" id="3.30.1330.10">
    <property type="entry name" value="PurM-like, N-terminal domain"/>
    <property type="match status" value="1"/>
</dbReference>
<dbReference type="HAMAP" id="MF_00741">
    <property type="entry name" value="AIRS"/>
    <property type="match status" value="1"/>
</dbReference>
<dbReference type="InterPro" id="IPR010918">
    <property type="entry name" value="PurM-like_C_dom"/>
</dbReference>
<dbReference type="InterPro" id="IPR036676">
    <property type="entry name" value="PurM-like_C_sf"/>
</dbReference>
<dbReference type="InterPro" id="IPR016188">
    <property type="entry name" value="PurM-like_N"/>
</dbReference>
<dbReference type="InterPro" id="IPR036921">
    <property type="entry name" value="PurM-like_N_sf"/>
</dbReference>
<dbReference type="InterPro" id="IPR004733">
    <property type="entry name" value="PurM_cligase"/>
</dbReference>
<dbReference type="NCBIfam" id="TIGR00878">
    <property type="entry name" value="purM"/>
    <property type="match status" value="1"/>
</dbReference>
<dbReference type="PANTHER" id="PTHR10520:SF12">
    <property type="entry name" value="TRIFUNCTIONAL PURINE BIOSYNTHETIC PROTEIN ADENOSINE-3"/>
    <property type="match status" value="1"/>
</dbReference>
<dbReference type="PANTHER" id="PTHR10520">
    <property type="entry name" value="TRIFUNCTIONAL PURINE BIOSYNTHETIC PROTEIN ADENOSINE-3-RELATED"/>
    <property type="match status" value="1"/>
</dbReference>
<dbReference type="Pfam" id="PF00586">
    <property type="entry name" value="AIRS"/>
    <property type="match status" value="1"/>
</dbReference>
<dbReference type="Pfam" id="PF02769">
    <property type="entry name" value="AIRS_C"/>
    <property type="match status" value="1"/>
</dbReference>
<dbReference type="SUPFAM" id="SSF56042">
    <property type="entry name" value="PurM C-terminal domain-like"/>
    <property type="match status" value="1"/>
</dbReference>
<dbReference type="SUPFAM" id="SSF55326">
    <property type="entry name" value="PurM N-terminal domain-like"/>
    <property type="match status" value="1"/>
</dbReference>
<accession>Q21VH4</accession>
<evidence type="ECO:0000255" key="1">
    <source>
        <dbReference type="HAMAP-Rule" id="MF_00741"/>
    </source>
</evidence>
<gene>
    <name evidence="1" type="primary">purM</name>
    <name type="ordered locus">Rfer_2512</name>
</gene>
<feature type="chain" id="PRO_0000258394" description="Phosphoribosylformylglycinamidine cyclo-ligase">
    <location>
        <begin position="1"/>
        <end position="349"/>
    </location>
</feature>
<organism>
    <name type="scientific">Albidiferax ferrireducens (strain ATCC BAA-621 / DSM 15236 / T118)</name>
    <name type="common">Rhodoferax ferrireducens</name>
    <dbReference type="NCBI Taxonomy" id="338969"/>
    <lineage>
        <taxon>Bacteria</taxon>
        <taxon>Pseudomonadati</taxon>
        <taxon>Pseudomonadota</taxon>
        <taxon>Betaproteobacteria</taxon>
        <taxon>Burkholderiales</taxon>
        <taxon>Comamonadaceae</taxon>
        <taxon>Rhodoferax</taxon>
    </lineage>
</organism>
<name>PUR5_ALBFT</name>
<sequence>MTQKNASSASPLSYKDAGVDIDAGDALIERIKPLAKKTMREGVLAGIGGFGALFEVPKRYKEPVLVSGTDGVGTKLKLAFEWNMHDTVGIDLVAMSVNDVLVQGAEPLFFLDYFACGKLDVDTAAAVVGGVAKGCELSGCALIGGETAEMPGMYPPGEYDLAGFCVGAVEKSKILTGVAIKPGDVVMGLASSGVHSNGFSLVRKCIERAGANAPATLDGKPFKQALMEPTRLYVKNVLAALAAHPIKALAHITGGGLLENIPRVLPEGTAAHLTKGSWPQTELFAWLQKTAGIDDFEMNRTFNNGIGMVVVIDASQAAACAATLRAAGEAVYVIGVIAARGDDAAVLVR</sequence>
<comment type="catalytic activity">
    <reaction evidence="1">
        <text>2-formamido-N(1)-(5-O-phospho-beta-D-ribosyl)acetamidine + ATP = 5-amino-1-(5-phospho-beta-D-ribosyl)imidazole + ADP + phosphate + H(+)</text>
        <dbReference type="Rhea" id="RHEA:23032"/>
        <dbReference type="ChEBI" id="CHEBI:15378"/>
        <dbReference type="ChEBI" id="CHEBI:30616"/>
        <dbReference type="ChEBI" id="CHEBI:43474"/>
        <dbReference type="ChEBI" id="CHEBI:137981"/>
        <dbReference type="ChEBI" id="CHEBI:147287"/>
        <dbReference type="ChEBI" id="CHEBI:456216"/>
        <dbReference type="EC" id="6.3.3.1"/>
    </reaction>
</comment>
<comment type="pathway">
    <text evidence="1">Purine metabolism; IMP biosynthesis via de novo pathway; 5-amino-1-(5-phospho-D-ribosyl)imidazole from N(2)-formyl-N(1)-(5-phospho-D-ribosyl)glycinamide: step 2/2.</text>
</comment>
<comment type="subcellular location">
    <subcellularLocation>
        <location evidence="1">Cytoplasm</location>
    </subcellularLocation>
</comment>
<comment type="similarity">
    <text evidence="1">Belongs to the AIR synthase family.</text>
</comment>
<protein>
    <recommendedName>
        <fullName evidence="1">Phosphoribosylformylglycinamidine cyclo-ligase</fullName>
        <ecNumber evidence="1">6.3.3.1</ecNumber>
    </recommendedName>
    <alternativeName>
        <fullName evidence="1">AIR synthase</fullName>
    </alternativeName>
    <alternativeName>
        <fullName evidence="1">AIRS</fullName>
    </alternativeName>
    <alternativeName>
        <fullName evidence="1">Phosphoribosyl-aminoimidazole synthetase</fullName>
    </alternativeName>
</protein>